<comment type="function">
    <text evidence="5">Component of the SRP (signal recognition particle) receptor (PubMed:7844142). Ensures, in conjunction with the signal recognition particle, the correct targeting of the nascent secretory proteins to the endoplasmic reticulum membrane system (PubMed:7844142). May mediate the membrane association of SR (PubMed:7844142).</text>
</comment>
<comment type="subunit">
    <text evidence="4">Heterodimer with SRPRA.</text>
</comment>
<comment type="subcellular location">
    <subcellularLocation>
        <location evidence="1">Endoplasmic reticulum membrane</location>
        <topology evidence="3">Single-pass membrane protein</topology>
    </subcellularLocation>
</comment>
<comment type="similarity">
    <text evidence="6">Belongs to the SRP receptor beta subunit family.</text>
</comment>
<name>SRPRB_MOUSE</name>
<sequence>MASANTRRVGDGAGGAFQPYLDSLRQELQQRDPTLLSVAVALLAVLLTLVFWKFIWSRKSSQRAVLFVGLCDSGKTLLFVRLLTGQYRDTQTSITDSSAIYKVNNNRGNSLTLIDLPGHESLRFQLLDRFKSSARAVVFVVDSAAFQREVKDVAEFLYQVLIDSMALKNSPSLLIACNKQDIAMAKSAKLIQQQLEKELNTLRVTRSAAPSTLDSSSTAPAQLGKKGKEFEFSQLPLKVEFLECSAKGGRGDTGSADIQDLEKWLAKIA</sequence>
<proteinExistence type="evidence at protein level"/>
<dbReference type="EMBL" id="U17343">
    <property type="protein sequence ID" value="AAA69976.1"/>
    <property type="molecule type" value="mRNA"/>
</dbReference>
<dbReference type="EMBL" id="AK004854">
    <property type="protein sequence ID" value="BAB23618.1"/>
    <property type="molecule type" value="mRNA"/>
</dbReference>
<dbReference type="EMBL" id="AK007859">
    <property type="protein sequence ID" value="BAB25311.1"/>
    <property type="molecule type" value="mRNA"/>
</dbReference>
<dbReference type="EMBL" id="AK008383">
    <property type="protein sequence ID" value="BAB25638.1"/>
    <property type="molecule type" value="mRNA"/>
</dbReference>
<dbReference type="EMBL" id="AK015469">
    <property type="protein sequence ID" value="BAB29860.1"/>
    <property type="molecule type" value="mRNA"/>
</dbReference>
<dbReference type="EMBL" id="AK030437">
    <property type="protein sequence ID" value="BAC26963.1"/>
    <property type="molecule type" value="mRNA"/>
</dbReference>
<dbReference type="EMBL" id="AK167039">
    <property type="protein sequence ID" value="BAE39207.1"/>
    <property type="molecule type" value="mRNA"/>
</dbReference>
<dbReference type="EMBL" id="BC003798">
    <property type="protein sequence ID" value="AAH03798.1"/>
    <property type="molecule type" value="mRNA"/>
</dbReference>
<dbReference type="CCDS" id="CCDS23450.1"/>
<dbReference type="PIR" id="A56487">
    <property type="entry name" value="A56487"/>
</dbReference>
<dbReference type="RefSeq" id="NP_033301.1">
    <property type="nucleotide sequence ID" value="NM_009275.4"/>
</dbReference>
<dbReference type="PDB" id="2FH5">
    <property type="method" value="X-ray"/>
    <property type="resolution" value="2.45 A"/>
    <property type="chains" value="B=58-269"/>
</dbReference>
<dbReference type="PDB" id="2GO5">
    <property type="method" value="EM"/>
    <property type="resolution" value="7.40 A"/>
    <property type="chains" value="2=58-269"/>
</dbReference>
<dbReference type="PDBsum" id="2FH5"/>
<dbReference type="PDBsum" id="2GO5"/>
<dbReference type="SMR" id="P47758"/>
<dbReference type="BioGRID" id="203504">
    <property type="interactions" value="10"/>
</dbReference>
<dbReference type="ComplexPortal" id="CPX-4622">
    <property type="entry name" value="Signal recognition particle receptor complex"/>
</dbReference>
<dbReference type="FunCoup" id="P47758">
    <property type="interactions" value="2126"/>
</dbReference>
<dbReference type="STRING" id="10090.ENSMUSP00000035157"/>
<dbReference type="GlyGen" id="P47758">
    <property type="glycosylation" value="1 site, 1 O-linked glycan (1 site)"/>
</dbReference>
<dbReference type="iPTMnet" id="P47758"/>
<dbReference type="PhosphoSitePlus" id="P47758"/>
<dbReference type="SwissPalm" id="P47758"/>
<dbReference type="jPOST" id="P47758"/>
<dbReference type="PaxDb" id="10090-ENSMUSP00000035157"/>
<dbReference type="PeptideAtlas" id="P47758"/>
<dbReference type="ProteomicsDB" id="254562"/>
<dbReference type="Pumba" id="P47758"/>
<dbReference type="TopDownProteomics" id="P47758"/>
<dbReference type="Antibodypedia" id="2504">
    <property type="antibodies" value="363 antibodies from 24 providers"/>
</dbReference>
<dbReference type="DNASU" id="20818"/>
<dbReference type="Ensembl" id="ENSMUST00000035157.10">
    <property type="protein sequence ID" value="ENSMUSP00000035157.9"/>
    <property type="gene ID" value="ENSMUSG00000032553.15"/>
</dbReference>
<dbReference type="GeneID" id="20818"/>
<dbReference type="KEGG" id="mmu:20818"/>
<dbReference type="UCSC" id="uc009rgg.1">
    <property type="organism name" value="mouse"/>
</dbReference>
<dbReference type="AGR" id="MGI:102964"/>
<dbReference type="CTD" id="58477"/>
<dbReference type="MGI" id="MGI:102964">
    <property type="gene designation" value="Srprb"/>
</dbReference>
<dbReference type="VEuPathDB" id="HostDB:ENSMUSG00000032553"/>
<dbReference type="eggNOG" id="KOG0090">
    <property type="taxonomic scope" value="Eukaryota"/>
</dbReference>
<dbReference type="GeneTree" id="ENSGT00940000154388"/>
<dbReference type="HOGENOM" id="CLU_046625_2_0_1"/>
<dbReference type="InParanoid" id="P47758"/>
<dbReference type="OMA" id="MNGVKVT"/>
<dbReference type="OrthoDB" id="41266at2759"/>
<dbReference type="PhylomeDB" id="P47758"/>
<dbReference type="TreeFam" id="TF106190"/>
<dbReference type="BRENDA" id="3.6.5.4">
    <property type="organism ID" value="3474"/>
</dbReference>
<dbReference type="BioGRID-ORCS" id="20818">
    <property type="hits" value="9 hits in 46 CRISPR screens"/>
</dbReference>
<dbReference type="CD-CODE" id="CE726F99">
    <property type="entry name" value="Postsynaptic density"/>
</dbReference>
<dbReference type="ChiTaRS" id="Srprb">
    <property type="organism name" value="mouse"/>
</dbReference>
<dbReference type="EvolutionaryTrace" id="P47758"/>
<dbReference type="PRO" id="PR:P47758"/>
<dbReference type="Proteomes" id="UP000000589">
    <property type="component" value="Chromosome 9"/>
</dbReference>
<dbReference type="RNAct" id="P47758">
    <property type="molecule type" value="protein"/>
</dbReference>
<dbReference type="Bgee" id="ENSMUSG00000032553">
    <property type="expression patterns" value="Expressed in saccule of membranous labyrinth and 262 other cell types or tissues"/>
</dbReference>
<dbReference type="ExpressionAtlas" id="P47758">
    <property type="expression patterns" value="baseline and differential"/>
</dbReference>
<dbReference type="GO" id="GO:0005881">
    <property type="term" value="C:cytoplasmic microtubule"/>
    <property type="evidence" value="ECO:0000250"/>
    <property type="project" value="UniProtKB"/>
</dbReference>
<dbReference type="GO" id="GO:0016020">
    <property type="term" value="C:membrane"/>
    <property type="evidence" value="ECO:0000266"/>
    <property type="project" value="MGI"/>
</dbReference>
<dbReference type="GO" id="GO:0005785">
    <property type="term" value="C:signal recognition particle receptor complex"/>
    <property type="evidence" value="ECO:0000269"/>
    <property type="project" value="ComplexPortal"/>
</dbReference>
<dbReference type="GO" id="GO:0005525">
    <property type="term" value="F:GTP binding"/>
    <property type="evidence" value="ECO:0007669"/>
    <property type="project" value="UniProtKB-KW"/>
</dbReference>
<dbReference type="GO" id="GO:0006617">
    <property type="term" value="P:SRP-dependent cotranslational protein targeting to membrane, signal sequence recognition"/>
    <property type="evidence" value="ECO:0000303"/>
    <property type="project" value="ComplexPortal"/>
</dbReference>
<dbReference type="CDD" id="cd04105">
    <property type="entry name" value="SR_beta"/>
    <property type="match status" value="1"/>
</dbReference>
<dbReference type="FunFam" id="3.40.50.300:FF:001173">
    <property type="entry name" value="signal recognition particle receptor subunit beta"/>
    <property type="match status" value="1"/>
</dbReference>
<dbReference type="Gene3D" id="3.40.50.300">
    <property type="entry name" value="P-loop containing nucleotide triphosphate hydrolases"/>
    <property type="match status" value="1"/>
</dbReference>
<dbReference type="InterPro" id="IPR027417">
    <property type="entry name" value="P-loop_NTPase"/>
</dbReference>
<dbReference type="InterPro" id="IPR024156">
    <property type="entry name" value="Small_GTPase_ARF"/>
</dbReference>
<dbReference type="InterPro" id="IPR019009">
    <property type="entry name" value="SRP_receptor_beta_su"/>
</dbReference>
<dbReference type="PANTHER" id="PTHR45909">
    <property type="entry name" value="ADP-RIBOSYLATION FACTOR-RELATED PROTEIN 1"/>
    <property type="match status" value="1"/>
</dbReference>
<dbReference type="PANTHER" id="PTHR45909:SF1">
    <property type="entry name" value="ADP-RIBOSYLATION FACTOR-RELATED PROTEIN 1"/>
    <property type="match status" value="1"/>
</dbReference>
<dbReference type="Pfam" id="PF09439">
    <property type="entry name" value="SRPRB"/>
    <property type="match status" value="1"/>
</dbReference>
<dbReference type="SUPFAM" id="SSF52540">
    <property type="entry name" value="P-loop containing nucleoside triphosphate hydrolases"/>
    <property type="match status" value="1"/>
</dbReference>
<reference key="1">
    <citation type="journal article" date="1995" name="J. Cell Biol.">
        <title>The beta subunit of the signal recognition particle receptor is a transmembrane GTPase that anchors the alpha subunit, a peripheral membrane GTPase, to the endoplasmic reticulum membrane.</title>
        <authorList>
            <person name="Miller J.D."/>
            <person name="Tajima S."/>
            <person name="Lauffer L."/>
            <person name="Walter P."/>
        </authorList>
    </citation>
    <scope>NUCLEOTIDE SEQUENCE [MRNA]</scope>
    <scope>FUNCTION</scope>
</reference>
<reference key="2">
    <citation type="journal article" date="2005" name="Science">
        <title>The transcriptional landscape of the mammalian genome.</title>
        <authorList>
            <person name="Carninci P."/>
            <person name="Kasukawa T."/>
            <person name="Katayama S."/>
            <person name="Gough J."/>
            <person name="Frith M.C."/>
            <person name="Maeda N."/>
            <person name="Oyama R."/>
            <person name="Ravasi T."/>
            <person name="Lenhard B."/>
            <person name="Wells C."/>
            <person name="Kodzius R."/>
            <person name="Shimokawa K."/>
            <person name="Bajic V.B."/>
            <person name="Brenner S.E."/>
            <person name="Batalov S."/>
            <person name="Forrest A.R."/>
            <person name="Zavolan M."/>
            <person name="Davis M.J."/>
            <person name="Wilming L.G."/>
            <person name="Aidinis V."/>
            <person name="Allen J.E."/>
            <person name="Ambesi-Impiombato A."/>
            <person name="Apweiler R."/>
            <person name="Aturaliya R.N."/>
            <person name="Bailey T.L."/>
            <person name="Bansal M."/>
            <person name="Baxter L."/>
            <person name="Beisel K.W."/>
            <person name="Bersano T."/>
            <person name="Bono H."/>
            <person name="Chalk A.M."/>
            <person name="Chiu K.P."/>
            <person name="Choudhary V."/>
            <person name="Christoffels A."/>
            <person name="Clutterbuck D.R."/>
            <person name="Crowe M.L."/>
            <person name="Dalla E."/>
            <person name="Dalrymple B.P."/>
            <person name="de Bono B."/>
            <person name="Della Gatta G."/>
            <person name="di Bernardo D."/>
            <person name="Down T."/>
            <person name="Engstrom P."/>
            <person name="Fagiolini M."/>
            <person name="Faulkner G."/>
            <person name="Fletcher C.F."/>
            <person name="Fukushima T."/>
            <person name="Furuno M."/>
            <person name="Futaki S."/>
            <person name="Gariboldi M."/>
            <person name="Georgii-Hemming P."/>
            <person name="Gingeras T.R."/>
            <person name="Gojobori T."/>
            <person name="Green R.E."/>
            <person name="Gustincich S."/>
            <person name="Harbers M."/>
            <person name="Hayashi Y."/>
            <person name="Hensch T.K."/>
            <person name="Hirokawa N."/>
            <person name="Hill D."/>
            <person name="Huminiecki L."/>
            <person name="Iacono M."/>
            <person name="Ikeo K."/>
            <person name="Iwama A."/>
            <person name="Ishikawa T."/>
            <person name="Jakt M."/>
            <person name="Kanapin A."/>
            <person name="Katoh M."/>
            <person name="Kawasawa Y."/>
            <person name="Kelso J."/>
            <person name="Kitamura H."/>
            <person name="Kitano H."/>
            <person name="Kollias G."/>
            <person name="Krishnan S.P."/>
            <person name="Kruger A."/>
            <person name="Kummerfeld S.K."/>
            <person name="Kurochkin I.V."/>
            <person name="Lareau L.F."/>
            <person name="Lazarevic D."/>
            <person name="Lipovich L."/>
            <person name="Liu J."/>
            <person name="Liuni S."/>
            <person name="McWilliam S."/>
            <person name="Madan Babu M."/>
            <person name="Madera M."/>
            <person name="Marchionni L."/>
            <person name="Matsuda H."/>
            <person name="Matsuzawa S."/>
            <person name="Miki H."/>
            <person name="Mignone F."/>
            <person name="Miyake S."/>
            <person name="Morris K."/>
            <person name="Mottagui-Tabar S."/>
            <person name="Mulder N."/>
            <person name="Nakano N."/>
            <person name="Nakauchi H."/>
            <person name="Ng P."/>
            <person name="Nilsson R."/>
            <person name="Nishiguchi S."/>
            <person name="Nishikawa S."/>
            <person name="Nori F."/>
            <person name="Ohara O."/>
            <person name="Okazaki Y."/>
            <person name="Orlando V."/>
            <person name="Pang K.C."/>
            <person name="Pavan W.J."/>
            <person name="Pavesi G."/>
            <person name="Pesole G."/>
            <person name="Petrovsky N."/>
            <person name="Piazza S."/>
            <person name="Reed J."/>
            <person name="Reid J.F."/>
            <person name="Ring B.Z."/>
            <person name="Ringwald M."/>
            <person name="Rost B."/>
            <person name="Ruan Y."/>
            <person name="Salzberg S.L."/>
            <person name="Sandelin A."/>
            <person name="Schneider C."/>
            <person name="Schoenbach C."/>
            <person name="Sekiguchi K."/>
            <person name="Semple C.A."/>
            <person name="Seno S."/>
            <person name="Sessa L."/>
            <person name="Sheng Y."/>
            <person name="Shibata Y."/>
            <person name="Shimada H."/>
            <person name="Shimada K."/>
            <person name="Silva D."/>
            <person name="Sinclair B."/>
            <person name="Sperling S."/>
            <person name="Stupka E."/>
            <person name="Sugiura K."/>
            <person name="Sultana R."/>
            <person name="Takenaka Y."/>
            <person name="Taki K."/>
            <person name="Tammoja K."/>
            <person name="Tan S.L."/>
            <person name="Tang S."/>
            <person name="Taylor M.S."/>
            <person name="Tegner J."/>
            <person name="Teichmann S.A."/>
            <person name="Ueda H.R."/>
            <person name="van Nimwegen E."/>
            <person name="Verardo R."/>
            <person name="Wei C.L."/>
            <person name="Yagi K."/>
            <person name="Yamanishi H."/>
            <person name="Zabarovsky E."/>
            <person name="Zhu S."/>
            <person name="Zimmer A."/>
            <person name="Hide W."/>
            <person name="Bult C."/>
            <person name="Grimmond S.M."/>
            <person name="Teasdale R.D."/>
            <person name="Liu E.T."/>
            <person name="Brusic V."/>
            <person name="Quackenbush J."/>
            <person name="Wahlestedt C."/>
            <person name="Mattick J.S."/>
            <person name="Hume D.A."/>
            <person name="Kai C."/>
            <person name="Sasaki D."/>
            <person name="Tomaru Y."/>
            <person name="Fukuda S."/>
            <person name="Kanamori-Katayama M."/>
            <person name="Suzuki M."/>
            <person name="Aoki J."/>
            <person name="Arakawa T."/>
            <person name="Iida J."/>
            <person name="Imamura K."/>
            <person name="Itoh M."/>
            <person name="Kato T."/>
            <person name="Kawaji H."/>
            <person name="Kawagashira N."/>
            <person name="Kawashima T."/>
            <person name="Kojima M."/>
            <person name="Kondo S."/>
            <person name="Konno H."/>
            <person name="Nakano K."/>
            <person name="Ninomiya N."/>
            <person name="Nishio T."/>
            <person name="Okada M."/>
            <person name="Plessy C."/>
            <person name="Shibata K."/>
            <person name="Shiraki T."/>
            <person name="Suzuki S."/>
            <person name="Tagami M."/>
            <person name="Waki K."/>
            <person name="Watahiki A."/>
            <person name="Okamura-Oho Y."/>
            <person name="Suzuki H."/>
            <person name="Kawai J."/>
            <person name="Hayashizaki Y."/>
        </authorList>
    </citation>
    <scope>NUCLEOTIDE SEQUENCE [LARGE SCALE MRNA]</scope>
    <source>
        <strain>C57BL/6J</strain>
        <tissue>Liver</tissue>
        <tissue>Pancreas</tissue>
        <tissue>Pituitary</tissue>
        <tissue>Small intestine</tissue>
        <tissue>Testis</tissue>
    </source>
</reference>
<reference key="3">
    <citation type="journal article" date="2004" name="Genome Res.">
        <title>The status, quality, and expansion of the NIH full-length cDNA project: the Mammalian Gene Collection (MGC).</title>
        <authorList>
            <consortium name="The MGC Project Team"/>
        </authorList>
    </citation>
    <scope>NUCLEOTIDE SEQUENCE [LARGE SCALE MRNA]</scope>
    <source>
        <strain>C57BL/6J</strain>
        <tissue>Mammary gland</tissue>
    </source>
</reference>
<reference key="4">
    <citation type="journal article" date="2006" name="J. Biol. Chem.">
        <title>The structure of the mammalian signal recognition particle (SRP) receptor as prototype for the interaction of small GTPases with Longin domains.</title>
        <authorList>
            <person name="Schlenker O."/>
            <person name="Hendricks A."/>
            <person name="Sinning I."/>
            <person name="Wild K."/>
        </authorList>
    </citation>
    <scope>X-RAY CRYSTALLOGRAPHY (2.45 ANGSTROMS) OF 58-269 IN COMPLEX WITH SRPR; MAGNESIUM IONS AND GTP</scope>
    <scope>SUBUNIT</scope>
</reference>
<reference key="5">
    <citation type="journal article" date="2006" name="Science">
        <title>Signal recognition particle receptor exposes the ribosomal translocon binding site.</title>
        <authorList>
            <person name="Halic M."/>
            <person name="Gartmann M."/>
            <person name="Schlenker O."/>
            <person name="Mielke T."/>
            <person name="Pool M.R."/>
            <person name="Sinning I."/>
            <person name="Beckmann R."/>
        </authorList>
    </citation>
    <scope>STRUCTURE BY ELECTRON MICROSCOPY (7.4 ANGSTROMS) OF 58-269 OF SIGNAL RECOGNITION PARTICLE IN COMPLEX WITH THE 80S RIBOSOME AND THE SRP RECEPTOR</scope>
</reference>
<evidence type="ECO:0000250" key="1">
    <source>
        <dbReference type="UniProtKB" id="O13950"/>
    </source>
</evidence>
<evidence type="ECO:0000250" key="2">
    <source>
        <dbReference type="UniProtKB" id="Q9Y5M8"/>
    </source>
</evidence>
<evidence type="ECO:0000255" key="3"/>
<evidence type="ECO:0000269" key="4">
    <source>
    </source>
</evidence>
<evidence type="ECO:0000269" key="5">
    <source>
    </source>
</evidence>
<evidence type="ECO:0000305" key="6"/>
<evidence type="ECO:0007829" key="7">
    <source>
        <dbReference type="PDB" id="2FH5"/>
    </source>
</evidence>
<organism>
    <name type="scientific">Mus musculus</name>
    <name type="common">Mouse</name>
    <dbReference type="NCBI Taxonomy" id="10090"/>
    <lineage>
        <taxon>Eukaryota</taxon>
        <taxon>Metazoa</taxon>
        <taxon>Chordata</taxon>
        <taxon>Craniata</taxon>
        <taxon>Vertebrata</taxon>
        <taxon>Euteleostomi</taxon>
        <taxon>Mammalia</taxon>
        <taxon>Eutheria</taxon>
        <taxon>Euarchontoglires</taxon>
        <taxon>Glires</taxon>
        <taxon>Rodentia</taxon>
        <taxon>Myomorpha</taxon>
        <taxon>Muroidea</taxon>
        <taxon>Muridae</taxon>
        <taxon>Murinae</taxon>
        <taxon>Mus</taxon>
        <taxon>Mus</taxon>
    </lineage>
</organism>
<accession>P47758</accession>
<accession>Q544X9</accession>
<accession>Q9D872</accession>
<gene>
    <name type="primary">Srprb</name>
</gene>
<feature type="chain" id="PRO_0000101228" description="Signal recognition particle receptor subunit beta">
    <location>
        <begin position="1"/>
        <end position="269"/>
    </location>
</feature>
<feature type="transmembrane region" description="Helical" evidence="3">
    <location>
        <begin position="35"/>
        <end position="55"/>
    </location>
</feature>
<feature type="binding site" evidence="4">
    <location>
        <begin position="69"/>
        <end position="77"/>
    </location>
    <ligand>
        <name>GTP</name>
        <dbReference type="ChEBI" id="CHEBI:37565"/>
    </ligand>
</feature>
<feature type="binding site" evidence="4">
    <location>
        <begin position="90"/>
        <end position="93"/>
    </location>
    <ligand>
        <name>GTP</name>
        <dbReference type="ChEBI" id="CHEBI:37565"/>
    </ligand>
</feature>
<feature type="binding site" evidence="4">
    <location>
        <position position="118"/>
    </location>
    <ligand>
        <name>GTP</name>
        <dbReference type="ChEBI" id="CHEBI:37565"/>
    </ligand>
</feature>
<feature type="binding site" evidence="4">
    <location>
        <begin position="178"/>
        <end position="181"/>
    </location>
    <ligand>
        <name>GTP</name>
        <dbReference type="ChEBI" id="CHEBI:37565"/>
    </ligand>
</feature>
<feature type="binding site" evidence="4">
    <location>
        <position position="246"/>
    </location>
    <ligand>
        <name>GTP</name>
        <dbReference type="ChEBI" id="CHEBI:37565"/>
    </ligand>
</feature>
<feature type="modified residue" description="Phosphoserine" evidence="2">
    <location>
        <position position="110"/>
    </location>
</feature>
<feature type="modified residue" description="Phosphothreonine" evidence="2">
    <location>
        <position position="212"/>
    </location>
</feature>
<feature type="sequence conflict" description="In Ref. 2; BAB25638." evidence="6" ref="2">
    <original>A</original>
    <variation>P</variation>
    <location>
        <position position="16"/>
    </location>
</feature>
<feature type="strand" evidence="7">
    <location>
        <begin position="64"/>
        <end position="68"/>
    </location>
</feature>
<feature type="helix" evidence="7">
    <location>
        <begin position="75"/>
        <end position="84"/>
    </location>
</feature>
<feature type="strand" evidence="7">
    <location>
        <begin position="97"/>
        <end position="102"/>
    </location>
</feature>
<feature type="strand" evidence="7">
    <location>
        <begin position="110"/>
        <end position="115"/>
    </location>
</feature>
<feature type="helix" evidence="7">
    <location>
        <begin position="120"/>
        <end position="130"/>
    </location>
</feature>
<feature type="helix" evidence="7">
    <location>
        <begin position="131"/>
        <end position="133"/>
    </location>
</feature>
<feature type="strand" evidence="7">
    <location>
        <begin position="134"/>
        <end position="142"/>
    </location>
</feature>
<feature type="turn" evidence="7">
    <location>
        <begin position="143"/>
        <end position="145"/>
    </location>
</feature>
<feature type="helix" evidence="7">
    <location>
        <begin position="146"/>
        <end position="165"/>
    </location>
</feature>
<feature type="strand" evidence="7">
    <location>
        <begin position="172"/>
        <end position="178"/>
    </location>
</feature>
<feature type="helix" evidence="7">
    <location>
        <begin position="188"/>
        <end position="205"/>
    </location>
</feature>
<feature type="helix" evidence="7">
    <location>
        <begin position="232"/>
        <end position="234"/>
    </location>
</feature>
<feature type="strand" evidence="7">
    <location>
        <begin position="235"/>
        <end position="237"/>
    </location>
</feature>
<feature type="strand" evidence="7">
    <location>
        <begin position="239"/>
        <end position="243"/>
    </location>
</feature>
<feature type="helix" evidence="7">
    <location>
        <begin position="259"/>
        <end position="268"/>
    </location>
</feature>
<protein>
    <recommendedName>
        <fullName>Signal recognition particle receptor subunit beta</fullName>
        <shortName>SR-beta</shortName>
    </recommendedName>
</protein>
<keyword id="KW-0002">3D-structure</keyword>
<keyword id="KW-0256">Endoplasmic reticulum</keyword>
<keyword id="KW-0342">GTP-binding</keyword>
<keyword id="KW-0472">Membrane</keyword>
<keyword id="KW-0547">Nucleotide-binding</keyword>
<keyword id="KW-0597">Phosphoprotein</keyword>
<keyword id="KW-0675">Receptor</keyword>
<keyword id="KW-1185">Reference proteome</keyword>
<keyword id="KW-0812">Transmembrane</keyword>
<keyword id="KW-1133">Transmembrane helix</keyword>